<keyword id="KW-0002">3D-structure</keyword>
<keyword id="KW-0997">Cell inner membrane</keyword>
<keyword id="KW-1003">Cell membrane</keyword>
<keyword id="KW-0448">Lipopolysaccharide biosynthesis</keyword>
<keyword id="KW-0472">Membrane</keyword>
<keyword id="KW-1185">Reference proteome</keyword>
<keyword id="KW-0812">Transmembrane</keyword>
<keyword id="KW-1133">Transmembrane helix</keyword>
<organism>
    <name type="scientific">Escherichia coli (strain K12)</name>
    <dbReference type="NCBI Taxonomy" id="83333"/>
    <lineage>
        <taxon>Bacteria</taxon>
        <taxon>Pseudomonadati</taxon>
        <taxon>Pseudomonadota</taxon>
        <taxon>Gammaproteobacteria</taxon>
        <taxon>Enterobacterales</taxon>
        <taxon>Enterobacteriaceae</taxon>
        <taxon>Escherichia</taxon>
    </lineage>
</organism>
<feature type="chain" id="PRO_0000065992" description="Chain length determinant protein">
    <location>
        <begin position="1"/>
        <end position="326"/>
    </location>
</feature>
<feature type="topological domain" description="Cytoplasmic" evidence="1">
    <location>
        <begin position="1"/>
        <end position="31"/>
    </location>
</feature>
<feature type="transmembrane region" description="Helical" evidence="1">
    <location>
        <begin position="32"/>
        <end position="52"/>
    </location>
</feature>
<feature type="topological domain" description="Periplasmic" evidence="1">
    <location>
        <begin position="53"/>
        <end position="295"/>
    </location>
</feature>
<feature type="transmembrane region" description="Helical" evidence="1">
    <location>
        <begin position="296"/>
        <end position="316"/>
    </location>
</feature>
<feature type="topological domain" description="Cytoplasmic" evidence="1">
    <location>
        <begin position="317"/>
        <end position="326"/>
    </location>
</feature>
<feature type="strand" evidence="5">
    <location>
        <begin position="21"/>
        <end position="23"/>
    </location>
</feature>
<feature type="helix" evidence="5">
    <location>
        <begin position="26"/>
        <end position="29"/>
    </location>
</feature>
<feature type="helix" evidence="5">
    <location>
        <begin position="32"/>
        <end position="48"/>
    </location>
</feature>
<feature type="turn" evidence="5">
    <location>
        <begin position="49"/>
        <end position="51"/>
    </location>
</feature>
<feature type="strand" evidence="5">
    <location>
        <begin position="57"/>
        <end position="63"/>
    </location>
</feature>
<feature type="turn" evidence="5">
    <location>
        <begin position="67"/>
        <end position="69"/>
    </location>
</feature>
<feature type="helix" evidence="5">
    <location>
        <begin position="71"/>
        <end position="79"/>
    </location>
</feature>
<feature type="helix" evidence="5">
    <location>
        <begin position="82"/>
        <end position="84"/>
    </location>
</feature>
<feature type="turn" evidence="5">
    <location>
        <begin position="88"/>
        <end position="90"/>
    </location>
</feature>
<feature type="helix" evidence="5">
    <location>
        <begin position="91"/>
        <end position="95"/>
    </location>
</feature>
<feature type="helix" evidence="5">
    <location>
        <begin position="97"/>
        <end position="103"/>
    </location>
</feature>
<feature type="turn" evidence="5">
    <location>
        <begin position="104"/>
        <end position="106"/>
    </location>
</feature>
<feature type="strand" evidence="5">
    <location>
        <begin position="107"/>
        <end position="110"/>
    </location>
</feature>
<feature type="strand" evidence="5">
    <location>
        <begin position="113"/>
        <end position="115"/>
    </location>
</feature>
<feature type="strand" evidence="5">
    <location>
        <begin position="119"/>
        <end position="129"/>
    </location>
</feature>
<feature type="strand" evidence="5">
    <location>
        <begin position="131"/>
        <end position="137"/>
    </location>
</feature>
<feature type="strand" evidence="5">
    <location>
        <begin position="139"/>
        <end position="142"/>
    </location>
</feature>
<feature type="turn" evidence="5">
    <location>
        <begin position="143"/>
        <end position="145"/>
    </location>
</feature>
<feature type="helix" evidence="5">
    <location>
        <begin position="146"/>
        <end position="159"/>
    </location>
</feature>
<feature type="helix" evidence="5">
    <location>
        <begin position="161"/>
        <end position="174"/>
    </location>
</feature>
<feature type="helix" evidence="5">
    <location>
        <begin position="176"/>
        <end position="179"/>
    </location>
</feature>
<feature type="turn" evidence="5">
    <location>
        <begin position="181"/>
        <end position="183"/>
    </location>
</feature>
<feature type="helix" evidence="5">
    <location>
        <begin position="184"/>
        <end position="209"/>
    </location>
</feature>
<feature type="helix" evidence="5">
    <location>
        <begin position="227"/>
        <end position="232"/>
    </location>
</feature>
<feature type="helix" evidence="5">
    <location>
        <begin position="234"/>
        <end position="237"/>
    </location>
</feature>
<feature type="helix" evidence="5">
    <location>
        <begin position="239"/>
        <end position="242"/>
    </location>
</feature>
<feature type="helix" evidence="5">
    <location>
        <begin position="255"/>
        <end position="267"/>
    </location>
</feature>
<feature type="strand" evidence="5">
    <location>
        <begin position="270"/>
        <end position="272"/>
    </location>
</feature>
<feature type="strand" evidence="5">
    <location>
        <begin position="279"/>
        <end position="282"/>
    </location>
</feature>
<feature type="helix" evidence="5">
    <location>
        <begin position="297"/>
        <end position="323"/>
    </location>
</feature>
<gene>
    <name type="primary">wzzB</name>
    <name type="synonym">cld</name>
    <name type="synonym">rol</name>
    <name type="synonym">wzz</name>
    <name type="ordered locus">b2027</name>
    <name type="ordered locus">JW5836</name>
</gene>
<name>WZZB_ECOLI</name>
<reference key="1">
    <citation type="submission" date="1997-01" db="EMBL/GenBank/DDBJ databases">
        <authorList>
            <person name="Klee S.R."/>
            <person name="Tzschaschel B.D."/>
            <person name="Timmis K.N."/>
            <person name="Guzman C.A."/>
        </authorList>
    </citation>
    <scope>NUCLEOTIDE SEQUENCE [GENOMIC DNA]</scope>
    <source>
        <strain>K12 / DH5-alpha</strain>
    </source>
</reference>
<reference key="2">
    <citation type="journal article" date="1996" name="DNA Res.">
        <title>A 460-kb DNA sequence of the Escherichia coli K-12 genome corresponding to the 40.1-50.0 min region on the linkage map.</title>
        <authorList>
            <person name="Itoh T."/>
            <person name="Aiba H."/>
            <person name="Baba T."/>
            <person name="Fujita K."/>
            <person name="Hayashi K."/>
            <person name="Inada T."/>
            <person name="Isono K."/>
            <person name="Kasai H."/>
            <person name="Kimura S."/>
            <person name="Kitakawa M."/>
            <person name="Kitagawa M."/>
            <person name="Makino K."/>
            <person name="Miki T."/>
            <person name="Mizobuchi K."/>
            <person name="Mori H."/>
            <person name="Mori T."/>
            <person name="Motomura K."/>
            <person name="Nakade S."/>
            <person name="Nakamura Y."/>
            <person name="Nashimoto H."/>
            <person name="Nishio Y."/>
            <person name="Oshima T."/>
            <person name="Saito N."/>
            <person name="Sampei G."/>
            <person name="Seki Y."/>
            <person name="Sivasundaram S."/>
            <person name="Tagami H."/>
            <person name="Takeda J."/>
            <person name="Takemoto K."/>
            <person name="Wada C."/>
            <person name="Yamamoto Y."/>
            <person name="Horiuchi T."/>
        </authorList>
    </citation>
    <scope>NUCLEOTIDE SEQUENCE [LARGE SCALE GENOMIC DNA]</scope>
    <source>
        <strain>K12 / W3110 / ATCC 27325 / DSM 5911</strain>
    </source>
</reference>
<reference key="3">
    <citation type="journal article" date="1997" name="Science">
        <title>The complete genome sequence of Escherichia coli K-12.</title>
        <authorList>
            <person name="Blattner F.R."/>
            <person name="Plunkett G. III"/>
            <person name="Bloch C.A."/>
            <person name="Perna N.T."/>
            <person name="Burland V."/>
            <person name="Riley M."/>
            <person name="Collado-Vides J."/>
            <person name="Glasner J.D."/>
            <person name="Rode C.K."/>
            <person name="Mayhew G.F."/>
            <person name="Gregor J."/>
            <person name="Davis N.W."/>
            <person name="Kirkpatrick H.A."/>
            <person name="Goeden M.A."/>
            <person name="Rose D.J."/>
            <person name="Mau B."/>
            <person name="Shao Y."/>
        </authorList>
    </citation>
    <scope>NUCLEOTIDE SEQUENCE [LARGE SCALE GENOMIC DNA]</scope>
    <source>
        <strain>K12 / MG1655 / ATCC 47076</strain>
    </source>
</reference>
<reference key="4">
    <citation type="journal article" date="2006" name="Mol. Syst. Biol.">
        <title>Highly accurate genome sequences of Escherichia coli K-12 strains MG1655 and W3110.</title>
        <authorList>
            <person name="Hayashi K."/>
            <person name="Morooka N."/>
            <person name="Yamamoto Y."/>
            <person name="Fujita K."/>
            <person name="Isono K."/>
            <person name="Choi S."/>
            <person name="Ohtsubo E."/>
            <person name="Baba T."/>
            <person name="Wanner B.L."/>
            <person name="Mori H."/>
            <person name="Horiuchi T."/>
        </authorList>
    </citation>
    <scope>NUCLEOTIDE SEQUENCE [LARGE SCALE GENOMIC DNA]</scope>
    <source>
        <strain>K12 / W3110 / ATCC 27325 / DSM 5911</strain>
    </source>
</reference>
<reference key="5">
    <citation type="journal article" date="2005" name="J. Biol. Chem.">
        <title>Protein complexes of the Escherichia coli cell envelope.</title>
        <authorList>
            <person name="Stenberg F."/>
            <person name="Chovanec P."/>
            <person name="Maslen S.L."/>
            <person name="Robinson C.V."/>
            <person name="Ilag L."/>
            <person name="von Heijne G."/>
            <person name="Daley D.O."/>
        </authorList>
    </citation>
    <scope>SUBUNIT</scope>
    <scope>SUBCELLULAR LOCATION</scope>
    <source>
        <strain>BL21-DE3</strain>
    </source>
</reference>
<reference key="6">
    <citation type="journal article" date="2005" name="Science">
        <title>Global topology analysis of the Escherichia coli inner membrane proteome.</title>
        <authorList>
            <person name="Daley D.O."/>
            <person name="Rapp M."/>
            <person name="Granseth E."/>
            <person name="Melen K."/>
            <person name="Drew D."/>
            <person name="von Heijne G."/>
        </authorList>
    </citation>
    <scope>SUBCELLULAR LOCATION</scope>
    <source>
        <strain>K12 / MG1655 / ATCC 47076</strain>
    </source>
</reference>
<protein>
    <recommendedName>
        <fullName>Chain length determinant protein</fullName>
    </recommendedName>
    <alternativeName>
        <fullName>Polysaccharide antigen chain regulator</fullName>
    </alternativeName>
</protein>
<dbReference type="EMBL" id="Y07559">
    <property type="protein sequence ID" value="CAA68844.1"/>
    <property type="molecule type" value="Genomic_DNA"/>
</dbReference>
<dbReference type="EMBL" id="U00096">
    <property type="protein sequence ID" value="AAC75088.2"/>
    <property type="molecule type" value="Genomic_DNA"/>
</dbReference>
<dbReference type="EMBL" id="AP009048">
    <property type="protein sequence ID" value="BAA15859.1"/>
    <property type="molecule type" value="Genomic_DNA"/>
</dbReference>
<dbReference type="RefSeq" id="NP_416531.4">
    <property type="nucleotide sequence ID" value="NC_000913.3"/>
</dbReference>
<dbReference type="RefSeq" id="WP_001393575.1">
    <property type="nucleotide sequence ID" value="NZ_LN832404.1"/>
</dbReference>
<dbReference type="PDB" id="6RBG">
    <property type="method" value="EM"/>
    <property type="resolution" value="3.00 A"/>
    <property type="chains" value="A/B/C/D/E/F/G/H=1-326"/>
</dbReference>
<dbReference type="PDBsum" id="6RBG"/>
<dbReference type="EMDB" id="EMD-11908"/>
<dbReference type="EMDB" id="EMD-11909"/>
<dbReference type="EMDB" id="EMD-4798"/>
<dbReference type="SMR" id="P76372"/>
<dbReference type="BioGRID" id="4261360">
    <property type="interactions" value="332"/>
</dbReference>
<dbReference type="FunCoup" id="P76372">
    <property type="interactions" value="24"/>
</dbReference>
<dbReference type="STRING" id="511145.b2027"/>
<dbReference type="jPOST" id="P76372"/>
<dbReference type="PaxDb" id="511145-b2027"/>
<dbReference type="EnsemblBacteria" id="AAC75088">
    <property type="protein sequence ID" value="AAC75088"/>
    <property type="gene ID" value="b2027"/>
</dbReference>
<dbReference type="GeneID" id="946553"/>
<dbReference type="KEGG" id="ecj:JW5836"/>
<dbReference type="KEGG" id="eco:b2027"/>
<dbReference type="KEGG" id="ecoc:C3026_11425"/>
<dbReference type="PATRIC" id="fig|1411691.4.peg.225"/>
<dbReference type="EchoBASE" id="EB3182"/>
<dbReference type="eggNOG" id="COG3765">
    <property type="taxonomic scope" value="Bacteria"/>
</dbReference>
<dbReference type="HOGENOM" id="CLU_060925_1_1_6"/>
<dbReference type="InParanoid" id="P76372"/>
<dbReference type="OMA" id="IIAKLWR"/>
<dbReference type="OrthoDB" id="6535795at2"/>
<dbReference type="PhylomeDB" id="P76372"/>
<dbReference type="BioCyc" id="EcoCyc:G7090-MONOMER"/>
<dbReference type="UniPathway" id="UPA00030"/>
<dbReference type="PRO" id="PR:P76372"/>
<dbReference type="Proteomes" id="UP000000625">
    <property type="component" value="Chromosome"/>
</dbReference>
<dbReference type="GO" id="GO:0005886">
    <property type="term" value="C:plasma membrane"/>
    <property type="evidence" value="ECO:0000318"/>
    <property type="project" value="GO_Central"/>
</dbReference>
<dbReference type="GO" id="GO:0004713">
    <property type="term" value="F:protein tyrosine kinase activity"/>
    <property type="evidence" value="ECO:0000318"/>
    <property type="project" value="GO_Central"/>
</dbReference>
<dbReference type="GO" id="GO:0009103">
    <property type="term" value="P:lipopolysaccharide biosynthetic process"/>
    <property type="evidence" value="ECO:0007669"/>
    <property type="project" value="UniProtKB-UniPathway"/>
</dbReference>
<dbReference type="FunFam" id="3.30.1890.10:FF:000002">
    <property type="entry name" value="O-antigen chain length determinant protein"/>
    <property type="match status" value="1"/>
</dbReference>
<dbReference type="Gene3D" id="3.30.1890.10">
    <property type="entry name" value="FepE-like"/>
    <property type="match status" value="1"/>
</dbReference>
<dbReference type="InterPro" id="IPR050445">
    <property type="entry name" value="Bact_polysacc_biosynth/exp"/>
</dbReference>
<dbReference type="InterPro" id="IPR003856">
    <property type="entry name" value="LPS_length_determ_N_term"/>
</dbReference>
<dbReference type="NCBIfam" id="NF012015">
    <property type="entry name" value="PRK15471.1"/>
    <property type="match status" value="1"/>
</dbReference>
<dbReference type="PANTHER" id="PTHR32309:SF29">
    <property type="entry name" value="CHAIN LENGTH DETERMINANT PROTEIN"/>
    <property type="match status" value="1"/>
</dbReference>
<dbReference type="PANTHER" id="PTHR32309">
    <property type="entry name" value="TYROSINE-PROTEIN KINASE"/>
    <property type="match status" value="1"/>
</dbReference>
<dbReference type="Pfam" id="PF02706">
    <property type="entry name" value="Wzz"/>
    <property type="match status" value="1"/>
</dbReference>
<dbReference type="SUPFAM" id="SSF160355">
    <property type="entry name" value="Bacterial polysaccharide co-polymerase-like"/>
    <property type="match status" value="1"/>
</dbReference>
<sequence>MRVENNNVSGQNHDPEQIDLIDLLVQLWRGKMTIIISVIVAIALAIGYLAVAKEKWTSTAIITQPDVGQIAGYNNAMNVIYGQAAPKVSDLQETLIGRFSSAFSALAETLDNQEEREKLTIEPSVKNQQLPLTVSYVGQTAEGAQMKLAQYIQQVDDKVNQELEKDLKDNIALGRKNLQDSLRTQEVVAQEQKDLRIRQIQEALQYANQAQVTKPQIQQTGEDITQDTLFLLGSEALESMIKHEATRPLVFSPNYYQTRQNLLDIESLKVDDLDIHAYRYVMKPMLPIRRDSPKKAITLILAVLLGGMVGAGIVLGRNALRNYNAK</sequence>
<evidence type="ECO:0000255" key="1"/>
<evidence type="ECO:0000269" key="2">
    <source>
    </source>
</evidence>
<evidence type="ECO:0000269" key="3">
    <source>
    </source>
</evidence>
<evidence type="ECO:0000305" key="4"/>
<evidence type="ECO:0007829" key="5">
    <source>
        <dbReference type="PDB" id="6RBG"/>
    </source>
</evidence>
<proteinExistence type="evidence at protein level"/>
<comment type="function">
    <text>Confers a modal distribution of chain length on the O-antigen component of lipopolysaccharide (LPS). Gives rise to a reduced number of short chain molecules and increases in numbers of longer molecules.</text>
</comment>
<comment type="pathway">
    <text>Bacterial outer membrane biogenesis; lipopolysaccharide biosynthesis.</text>
</comment>
<comment type="subunit">
    <text evidence="3">Homodimer.</text>
</comment>
<comment type="subcellular location">
    <subcellularLocation>
        <location evidence="2 3">Cell inner membrane</location>
        <topology evidence="2 3">Multi-pass membrane protein</topology>
    </subcellularLocation>
</comment>
<comment type="similarity">
    <text evidence="4">Belongs to the WzzB/Cld/Rol family.</text>
</comment>
<accession>P76372</accession>
<accession>O07997</accession>
<accession>O07998</accession>
<accession>P77049</accession>